<comment type="function">
    <text evidence="1">Catalyzes the condensation reaction of fatty acid synthesis by the addition to an acyl acceptor of two carbons from malonyl-ACP. Catalyzes the first condensation reaction which initiates fatty acid synthesis and may therefore play a role in governing the total rate of fatty acid production. Possesses both acetoacetyl-ACP synthase and acetyl transacylase activities. Its substrate specificity determines the biosynthesis of branched-chain and/or straight-chain of fatty acids.</text>
</comment>
<comment type="catalytic activity">
    <reaction evidence="1">
        <text>malonyl-[ACP] + acetyl-CoA + H(+) = 3-oxobutanoyl-[ACP] + CO2 + CoA</text>
        <dbReference type="Rhea" id="RHEA:12080"/>
        <dbReference type="Rhea" id="RHEA-COMP:9623"/>
        <dbReference type="Rhea" id="RHEA-COMP:9625"/>
        <dbReference type="ChEBI" id="CHEBI:15378"/>
        <dbReference type="ChEBI" id="CHEBI:16526"/>
        <dbReference type="ChEBI" id="CHEBI:57287"/>
        <dbReference type="ChEBI" id="CHEBI:57288"/>
        <dbReference type="ChEBI" id="CHEBI:78449"/>
        <dbReference type="ChEBI" id="CHEBI:78450"/>
        <dbReference type="EC" id="2.3.1.180"/>
    </reaction>
</comment>
<comment type="pathway">
    <text evidence="1">Lipid metabolism; fatty acid biosynthesis.</text>
</comment>
<comment type="subunit">
    <text evidence="1">Homodimer.</text>
</comment>
<comment type="subcellular location">
    <subcellularLocation>
        <location evidence="1">Cytoplasm</location>
    </subcellularLocation>
</comment>
<comment type="domain">
    <text evidence="1">The last Arg residue of the ACP-binding site is essential for the weak association between ACP/AcpP and FabH.</text>
</comment>
<comment type="similarity">
    <text evidence="1">Belongs to the thiolase-like superfamily. FabH family.</text>
</comment>
<gene>
    <name evidence="1" type="primary">fabH</name>
    <name type="ordered locus">SUB1500</name>
</gene>
<protein>
    <recommendedName>
        <fullName evidence="1">Beta-ketoacyl-[acyl-carrier-protein] synthase III</fullName>
        <shortName evidence="1">Beta-ketoacyl-ACP synthase III</shortName>
        <shortName evidence="1">KAS III</shortName>
        <ecNumber evidence="1">2.3.1.180</ecNumber>
    </recommendedName>
    <alternativeName>
        <fullName evidence="1">3-oxoacyl-[acyl-carrier-protein] synthase 3</fullName>
    </alternativeName>
    <alternativeName>
        <fullName evidence="1">3-oxoacyl-[acyl-carrier-protein] synthase III</fullName>
    </alternativeName>
</protein>
<keyword id="KW-0012">Acyltransferase</keyword>
<keyword id="KW-0963">Cytoplasm</keyword>
<keyword id="KW-0275">Fatty acid biosynthesis</keyword>
<keyword id="KW-0276">Fatty acid metabolism</keyword>
<keyword id="KW-0444">Lipid biosynthesis</keyword>
<keyword id="KW-0443">Lipid metabolism</keyword>
<keyword id="KW-0511">Multifunctional enzyme</keyword>
<keyword id="KW-1185">Reference proteome</keyword>
<keyword id="KW-0808">Transferase</keyword>
<proteinExistence type="inferred from homology"/>
<name>FABH_STRU0</name>
<accession>B9DVE9</accession>
<sequence>MTYSKISQAAHHLPEQVISNDDLSLILETNDQWISSRTGIKERRISRSENTSDLASRVAEKLLEKANIDATEIDFIIVATITGDSIMPSVAAKVQGTIGATHAFAFDMTAACSGFVFALAMADKLIRSASYQKGLVIGAEVLSKYLDWEDRSTAVLFGDGAGGVLVEACSEQHFMAESLHTDGSRGQNLTSGNNPLRSPFSDSEEASPFIKMDGRAIFDFAIRDVSKSIISLLEESSVTAEEIDYFLLHQANRRILDKMARKIGCPRDKFLENMMTYGNTSAASIPILLSESVEKGLILLDGSQKVLLSGFGGGLTWGSLIVKI</sequence>
<dbReference type="EC" id="2.3.1.180" evidence="1"/>
<dbReference type="EMBL" id="AM946015">
    <property type="protein sequence ID" value="CAR43219.1"/>
    <property type="molecule type" value="Genomic_DNA"/>
</dbReference>
<dbReference type="RefSeq" id="WP_015911809.1">
    <property type="nucleotide sequence ID" value="NC_012004.1"/>
</dbReference>
<dbReference type="SMR" id="B9DVE9"/>
<dbReference type="STRING" id="218495.SUB1500"/>
<dbReference type="KEGG" id="sub:SUB1500"/>
<dbReference type="eggNOG" id="COG0332">
    <property type="taxonomic scope" value="Bacteria"/>
</dbReference>
<dbReference type="HOGENOM" id="CLU_039592_4_1_9"/>
<dbReference type="OrthoDB" id="9815506at2"/>
<dbReference type="UniPathway" id="UPA00094"/>
<dbReference type="Proteomes" id="UP000000449">
    <property type="component" value="Chromosome"/>
</dbReference>
<dbReference type="GO" id="GO:0005737">
    <property type="term" value="C:cytoplasm"/>
    <property type="evidence" value="ECO:0007669"/>
    <property type="project" value="UniProtKB-SubCell"/>
</dbReference>
<dbReference type="GO" id="GO:0004315">
    <property type="term" value="F:3-oxoacyl-[acyl-carrier-protein] synthase activity"/>
    <property type="evidence" value="ECO:0007669"/>
    <property type="project" value="InterPro"/>
</dbReference>
<dbReference type="GO" id="GO:0033818">
    <property type="term" value="F:beta-ketoacyl-acyl-carrier-protein synthase III activity"/>
    <property type="evidence" value="ECO:0007669"/>
    <property type="project" value="UniProtKB-UniRule"/>
</dbReference>
<dbReference type="GO" id="GO:0006633">
    <property type="term" value="P:fatty acid biosynthetic process"/>
    <property type="evidence" value="ECO:0007669"/>
    <property type="project" value="UniProtKB-UniRule"/>
</dbReference>
<dbReference type="CDD" id="cd00830">
    <property type="entry name" value="KAS_III"/>
    <property type="match status" value="1"/>
</dbReference>
<dbReference type="Gene3D" id="3.40.47.10">
    <property type="match status" value="1"/>
</dbReference>
<dbReference type="HAMAP" id="MF_01815">
    <property type="entry name" value="FabH"/>
    <property type="match status" value="1"/>
</dbReference>
<dbReference type="InterPro" id="IPR013747">
    <property type="entry name" value="ACP_syn_III_C"/>
</dbReference>
<dbReference type="InterPro" id="IPR013751">
    <property type="entry name" value="ACP_syn_III_N"/>
</dbReference>
<dbReference type="InterPro" id="IPR004655">
    <property type="entry name" value="FabH"/>
</dbReference>
<dbReference type="InterPro" id="IPR016039">
    <property type="entry name" value="Thiolase-like"/>
</dbReference>
<dbReference type="NCBIfam" id="TIGR00747">
    <property type="entry name" value="fabH"/>
    <property type="match status" value="1"/>
</dbReference>
<dbReference type="NCBIfam" id="NF006829">
    <property type="entry name" value="PRK09352.1"/>
    <property type="match status" value="1"/>
</dbReference>
<dbReference type="PANTHER" id="PTHR43091">
    <property type="entry name" value="3-OXOACYL-[ACYL-CARRIER-PROTEIN] SYNTHASE"/>
    <property type="match status" value="1"/>
</dbReference>
<dbReference type="PANTHER" id="PTHR43091:SF1">
    <property type="entry name" value="BETA-KETOACYL-[ACYL-CARRIER-PROTEIN] SYNTHASE III, CHLOROPLASTIC"/>
    <property type="match status" value="1"/>
</dbReference>
<dbReference type="Pfam" id="PF08545">
    <property type="entry name" value="ACP_syn_III"/>
    <property type="match status" value="1"/>
</dbReference>
<dbReference type="Pfam" id="PF08541">
    <property type="entry name" value="ACP_syn_III_C"/>
    <property type="match status" value="1"/>
</dbReference>
<dbReference type="SUPFAM" id="SSF53901">
    <property type="entry name" value="Thiolase-like"/>
    <property type="match status" value="1"/>
</dbReference>
<reference key="1">
    <citation type="journal article" date="2009" name="BMC Genomics">
        <title>Evidence for niche adaptation in the genome of the bovine pathogen Streptococcus uberis.</title>
        <authorList>
            <person name="Ward P.N."/>
            <person name="Holden M.T.G."/>
            <person name="Leigh J.A."/>
            <person name="Lennard N."/>
            <person name="Bignell A."/>
            <person name="Barron A."/>
            <person name="Clark L."/>
            <person name="Quail M.A."/>
            <person name="Woodward J."/>
            <person name="Barrell B.G."/>
            <person name="Egan S.A."/>
            <person name="Field T.R."/>
            <person name="Maskell D."/>
            <person name="Kehoe M."/>
            <person name="Dowson C.G."/>
            <person name="Chanter N."/>
            <person name="Whatmore A.M."/>
            <person name="Bentley S.D."/>
            <person name="Parkhill J."/>
        </authorList>
    </citation>
    <scope>NUCLEOTIDE SEQUENCE [LARGE SCALE GENOMIC DNA]</scope>
    <source>
        <strain>ATCC BAA-854 / 0140J</strain>
    </source>
</reference>
<organism>
    <name type="scientific">Streptococcus uberis (strain ATCC BAA-854 / 0140J)</name>
    <dbReference type="NCBI Taxonomy" id="218495"/>
    <lineage>
        <taxon>Bacteria</taxon>
        <taxon>Bacillati</taxon>
        <taxon>Bacillota</taxon>
        <taxon>Bacilli</taxon>
        <taxon>Lactobacillales</taxon>
        <taxon>Streptococcaceae</taxon>
        <taxon>Streptococcus</taxon>
    </lineage>
</organism>
<feature type="chain" id="PRO_1000187903" description="Beta-ketoacyl-[acyl-carrier-protein] synthase III">
    <location>
        <begin position="1"/>
        <end position="324"/>
    </location>
</feature>
<feature type="region of interest" description="Disordered" evidence="2">
    <location>
        <begin position="181"/>
        <end position="202"/>
    </location>
</feature>
<feature type="region of interest" description="ACP-binding" evidence="1">
    <location>
        <begin position="250"/>
        <end position="254"/>
    </location>
</feature>
<feature type="compositionally biased region" description="Polar residues" evidence="2">
    <location>
        <begin position="184"/>
        <end position="196"/>
    </location>
</feature>
<feature type="active site" evidence="1">
    <location>
        <position position="112"/>
    </location>
</feature>
<feature type="active site" evidence="1">
    <location>
        <position position="249"/>
    </location>
</feature>
<feature type="active site" evidence="1">
    <location>
        <position position="279"/>
    </location>
</feature>
<evidence type="ECO:0000255" key="1">
    <source>
        <dbReference type="HAMAP-Rule" id="MF_01815"/>
    </source>
</evidence>
<evidence type="ECO:0000256" key="2">
    <source>
        <dbReference type="SAM" id="MobiDB-lite"/>
    </source>
</evidence>